<reference key="1">
    <citation type="submission" date="2004-06" db="EMBL/GenBank/DDBJ databases">
        <authorList>
            <consortium name="NIH - Zebrafish Gene Collection (ZGC) project"/>
        </authorList>
    </citation>
    <scope>NUCLEOTIDE SEQUENCE [LARGE SCALE MRNA]</scope>
    <source>
        <tissue>Embryo</tissue>
    </source>
</reference>
<accession>Q6IQU4</accession>
<sequence>MTTAARPTFEPARGGRGKGEGDLSALSKQYSSRDLPGHTKIKYRQPTQDAPEEVRARDFRRELEERERAAVKGRDRGAREHTTSSSSSSSSSSSKRPRLDQIPAANLDADDPLTDDEDDSGSDSDSDDDTAALLAELEKIKRERAEEQERKEREQKAEEERIRMENILSGNPLLNLAGQQQQQQQQQQQTQTKNTFSVKRRWDDDVVFKNCAKGVDESRKEKRFVNDTLRSEFHKKFMEKYVK</sequence>
<dbReference type="EMBL" id="BC071310">
    <property type="protein sequence ID" value="AAH71310.1"/>
    <property type="molecule type" value="mRNA"/>
</dbReference>
<dbReference type="SMR" id="Q6IQU4"/>
<dbReference type="FunCoup" id="Q6IQU4">
    <property type="interactions" value="2598"/>
</dbReference>
<dbReference type="STRING" id="7955.ENSDARP00000022647"/>
<dbReference type="PaxDb" id="7955-ENSDARP00000022647"/>
<dbReference type="PeptideAtlas" id="Q6IQU4"/>
<dbReference type="AGR" id="ZFIN:ZDB-GENE-040625-10"/>
<dbReference type="ZFIN" id="ZDB-GENE-040625-10">
    <property type="gene designation" value="cwc15"/>
</dbReference>
<dbReference type="eggNOG" id="KOG3228">
    <property type="taxonomic scope" value="Eukaryota"/>
</dbReference>
<dbReference type="InParanoid" id="Q6IQU4"/>
<dbReference type="Reactome" id="R-DRE-72163">
    <property type="pathway name" value="mRNA Splicing - Major Pathway"/>
</dbReference>
<dbReference type="PRO" id="PR:Q6IQU4"/>
<dbReference type="Proteomes" id="UP000000437">
    <property type="component" value="Unplaced"/>
</dbReference>
<dbReference type="GO" id="GO:0071013">
    <property type="term" value="C:catalytic step 2 spliceosome"/>
    <property type="evidence" value="ECO:0000318"/>
    <property type="project" value="GO_Central"/>
</dbReference>
<dbReference type="GO" id="GO:0005634">
    <property type="term" value="C:nucleus"/>
    <property type="evidence" value="ECO:0000250"/>
    <property type="project" value="UniProtKB"/>
</dbReference>
<dbReference type="GO" id="GO:0071007">
    <property type="term" value="C:U2-type catalytic step 2 spliceosome"/>
    <property type="evidence" value="ECO:0000250"/>
    <property type="project" value="UniProtKB"/>
</dbReference>
<dbReference type="GO" id="GO:0003723">
    <property type="term" value="F:RNA binding"/>
    <property type="evidence" value="ECO:0000250"/>
    <property type="project" value="UniProtKB"/>
</dbReference>
<dbReference type="GO" id="GO:0045292">
    <property type="term" value="P:mRNA cis splicing, via spliceosome"/>
    <property type="evidence" value="ECO:0000318"/>
    <property type="project" value="GO_Central"/>
</dbReference>
<dbReference type="GO" id="GO:0000398">
    <property type="term" value="P:mRNA splicing, via spliceosome"/>
    <property type="evidence" value="ECO:0000250"/>
    <property type="project" value="UniProtKB"/>
</dbReference>
<dbReference type="InterPro" id="IPR006973">
    <property type="entry name" value="Cwf_Cwc_15"/>
</dbReference>
<dbReference type="PANTHER" id="PTHR12718">
    <property type="entry name" value="CELL CYCLE CONTROL PROTEIN CWF15"/>
    <property type="match status" value="1"/>
</dbReference>
<dbReference type="PANTHER" id="PTHR12718:SF2">
    <property type="entry name" value="SPLICEOSOME-ASSOCIATED PROTEIN CWC15 HOMOLOG"/>
    <property type="match status" value="1"/>
</dbReference>
<dbReference type="Pfam" id="PF04889">
    <property type="entry name" value="Cwf_Cwc_15"/>
    <property type="match status" value="1"/>
</dbReference>
<feature type="chain" id="PRO_0000291547" description="Protein CWC15 homolog">
    <location>
        <begin position="1"/>
        <end position="243"/>
    </location>
</feature>
<feature type="region of interest" description="Disordered" evidence="3">
    <location>
        <begin position="1"/>
        <end position="159"/>
    </location>
</feature>
<feature type="region of interest" description="Disordered" evidence="3">
    <location>
        <begin position="176"/>
        <end position="196"/>
    </location>
</feature>
<feature type="coiled-coil region" evidence="2">
    <location>
        <begin position="127"/>
        <end position="169"/>
    </location>
</feature>
<feature type="compositionally biased region" description="Basic and acidic residues" evidence="3">
    <location>
        <begin position="52"/>
        <end position="82"/>
    </location>
</feature>
<feature type="compositionally biased region" description="Low complexity" evidence="3">
    <location>
        <begin position="84"/>
        <end position="94"/>
    </location>
</feature>
<feature type="compositionally biased region" description="Acidic residues" evidence="3">
    <location>
        <begin position="108"/>
        <end position="130"/>
    </location>
</feature>
<feature type="compositionally biased region" description="Basic and acidic residues" evidence="3">
    <location>
        <begin position="136"/>
        <end position="159"/>
    </location>
</feature>
<feature type="compositionally biased region" description="Low complexity" evidence="3">
    <location>
        <begin position="179"/>
        <end position="192"/>
    </location>
</feature>
<comment type="function">
    <text evidence="1">Involved in pre-mRNA splicing as component of the spliceosome.</text>
</comment>
<comment type="subunit">
    <text evidence="1">Identified in the spliceosome C complex. Component of the minor spliceosome, which splices U12-type introns (By similarity).</text>
</comment>
<comment type="subcellular location">
    <subcellularLocation>
        <location evidence="1">Nucleus</location>
    </subcellularLocation>
</comment>
<comment type="similarity">
    <text evidence="4">Belongs to the CWC15 family.</text>
</comment>
<organism>
    <name type="scientific">Danio rerio</name>
    <name type="common">Zebrafish</name>
    <name type="synonym">Brachydanio rerio</name>
    <dbReference type="NCBI Taxonomy" id="7955"/>
    <lineage>
        <taxon>Eukaryota</taxon>
        <taxon>Metazoa</taxon>
        <taxon>Chordata</taxon>
        <taxon>Craniata</taxon>
        <taxon>Vertebrata</taxon>
        <taxon>Euteleostomi</taxon>
        <taxon>Actinopterygii</taxon>
        <taxon>Neopterygii</taxon>
        <taxon>Teleostei</taxon>
        <taxon>Ostariophysi</taxon>
        <taxon>Cypriniformes</taxon>
        <taxon>Danionidae</taxon>
        <taxon>Danioninae</taxon>
        <taxon>Danio</taxon>
    </lineage>
</organism>
<gene>
    <name type="primary">cwc15</name>
    <name type="ORF">zgc:86607</name>
</gene>
<proteinExistence type="evidence at transcript level"/>
<name>CWC15_DANRE</name>
<keyword id="KW-0175">Coiled coil</keyword>
<keyword id="KW-0507">mRNA processing</keyword>
<keyword id="KW-0508">mRNA splicing</keyword>
<keyword id="KW-0539">Nucleus</keyword>
<keyword id="KW-1185">Reference proteome</keyword>
<keyword id="KW-0747">Spliceosome</keyword>
<protein>
    <recommendedName>
        <fullName>Protein CWC15 homolog</fullName>
    </recommendedName>
</protein>
<evidence type="ECO:0000250" key="1">
    <source>
        <dbReference type="UniProtKB" id="Q9P013"/>
    </source>
</evidence>
<evidence type="ECO:0000255" key="2"/>
<evidence type="ECO:0000256" key="3">
    <source>
        <dbReference type="SAM" id="MobiDB-lite"/>
    </source>
</evidence>
<evidence type="ECO:0000305" key="4"/>